<feature type="chain" id="PRO_0000053454" description="Thyroid hormone receptor beta">
    <location>
        <begin position="1"/>
        <end position="369"/>
    </location>
</feature>
<feature type="domain" description="NR LBD" evidence="4">
    <location>
        <begin position="125"/>
        <end position="369"/>
    </location>
</feature>
<feature type="DNA-binding region" description="Nuclear receptor" evidence="3">
    <location>
        <begin position="15"/>
        <end position="89"/>
    </location>
</feature>
<feature type="zinc finger region" description="NR C4-type" evidence="3">
    <location>
        <begin position="15"/>
        <end position="35"/>
    </location>
</feature>
<feature type="zinc finger region" description="NR C4-type" evidence="3">
    <location>
        <begin position="53"/>
        <end position="77"/>
    </location>
</feature>
<feature type="region of interest" description="Modulating" evidence="2">
    <location>
        <begin position="1"/>
        <end position="14"/>
    </location>
</feature>
<feature type="binding site" evidence="1">
    <location>
        <position position="15"/>
    </location>
    <ligand>
        <name>Zn(2+)</name>
        <dbReference type="ChEBI" id="CHEBI:29105"/>
        <label>1</label>
    </ligand>
</feature>
<feature type="binding site" evidence="1">
    <location>
        <position position="18"/>
    </location>
    <ligand>
        <name>Zn(2+)</name>
        <dbReference type="ChEBI" id="CHEBI:29105"/>
        <label>1</label>
    </ligand>
</feature>
<feature type="binding site" evidence="1">
    <location>
        <position position="32"/>
    </location>
    <ligand>
        <name>Zn(2+)</name>
        <dbReference type="ChEBI" id="CHEBI:29105"/>
        <label>1</label>
    </ligand>
</feature>
<feature type="binding site" evidence="1">
    <location>
        <position position="35"/>
    </location>
    <ligand>
        <name>Zn(2+)</name>
        <dbReference type="ChEBI" id="CHEBI:29105"/>
        <label>1</label>
    </ligand>
</feature>
<feature type="binding site" evidence="1">
    <location>
        <position position="53"/>
    </location>
    <ligand>
        <name>Zn(2+)</name>
        <dbReference type="ChEBI" id="CHEBI:29105"/>
        <label>2</label>
    </ligand>
</feature>
<feature type="binding site" evidence="1">
    <location>
        <position position="59"/>
    </location>
    <ligand>
        <name>Zn(2+)</name>
        <dbReference type="ChEBI" id="CHEBI:29105"/>
        <label>2</label>
    </ligand>
</feature>
<feature type="binding site" evidence="1">
    <location>
        <position position="69"/>
    </location>
    <ligand>
        <name>Zn(2+)</name>
        <dbReference type="ChEBI" id="CHEBI:29105"/>
        <label>2</label>
    </ligand>
</feature>
<feature type="binding site" evidence="1">
    <location>
        <position position="72"/>
    </location>
    <ligand>
        <name>Zn(2+)</name>
        <dbReference type="ChEBI" id="CHEBI:29105"/>
        <label>2</label>
    </ligand>
</feature>
<feature type="binding site" evidence="1">
    <location>
        <position position="190"/>
    </location>
    <ligand>
        <name>3,3',5-triiodo-L-thyronine</name>
        <dbReference type="ChEBI" id="CHEBI:533015"/>
    </ligand>
</feature>
<feature type="binding site" evidence="1">
    <location>
        <position position="190"/>
    </location>
    <ligand>
        <name>L-thyroxine</name>
        <dbReference type="ChEBI" id="CHEBI:58448"/>
    </ligand>
</feature>
<feature type="binding site" evidence="1">
    <location>
        <position position="239"/>
    </location>
    <ligand>
        <name>3,3',5-triiodo-L-thyronine</name>
        <dbReference type="ChEBI" id="CHEBI:533015"/>
    </ligand>
</feature>
<feature type="binding site" evidence="1">
    <location>
        <position position="239"/>
    </location>
    <ligand>
        <name>L-thyroxine</name>
        <dbReference type="ChEBI" id="CHEBI:58448"/>
    </ligand>
</feature>
<feature type="binding site" evidence="1">
    <location>
        <position position="343"/>
    </location>
    <ligand>
        <name>3,3',5-triiodo-L-thyronine</name>
        <dbReference type="ChEBI" id="CHEBI:533015"/>
        <label>1</label>
    </ligand>
</feature>
<feature type="binding site" evidence="1">
    <location>
        <position position="343"/>
    </location>
    <ligand>
        <name>L-thyroxine</name>
        <dbReference type="ChEBI" id="CHEBI:58448"/>
    </ligand>
</feature>
<feature type="sequence conflict" description="In Ref. 2." evidence="5" ref="2">
    <original>I</original>
    <variation>M</variation>
    <location>
        <position position="116"/>
    </location>
</feature>
<feature type="sequence conflict" description="In Ref. 2." evidence="5" ref="2">
    <original>G</original>
    <variation>V</variation>
    <location>
        <position position="117"/>
    </location>
</feature>
<feature type="sequence conflict" description="In Ref. 2; AAA49107." evidence="5" ref="2">
    <original>G</original>
    <variation>V</variation>
    <location>
        <position position="144"/>
    </location>
</feature>
<feature type="sequence conflict" description="In Ref. 2; AAA49107." evidence="5" ref="2">
    <original>C</original>
    <variation>L</variation>
    <location>
        <position position="202"/>
    </location>
</feature>
<feature type="sequence conflict" description="In Ref. 2; AAA49107." evidence="5" ref="2">
    <original>G</original>
    <variation>V</variation>
    <location>
        <position position="215"/>
    </location>
</feature>
<comment type="function">
    <text>Nuclear hormone receptor that can act as a repressor or activator of transcription. High affinity receptor for thyroid hormones, including triiodothyronine and thyroxine.</text>
</comment>
<comment type="interaction">
    <interactant intactId="EBI-5743841">
        <id>P68306</id>
    </interactant>
    <interactant intactId="EBI-1646500">
        <id>Q8IXJ9</id>
        <label>ASXL1</label>
    </interactant>
    <organismsDiffer>true</organismsDiffer>
    <experiments>2</experiments>
</comment>
<comment type="subcellular location">
    <subcellularLocation>
        <location>Nucleus</location>
    </subcellularLocation>
</comment>
<comment type="domain">
    <text>Composed of three domains: a modulating N-terminal domain, a DNA-binding domain and a C-terminal ligand-binding domain.</text>
</comment>
<comment type="similarity">
    <text evidence="5">Belongs to the nuclear hormone receptor family. NR1 subfamily.</text>
</comment>
<keyword id="KW-0238">DNA-binding</keyword>
<keyword id="KW-0479">Metal-binding</keyword>
<keyword id="KW-0539">Nucleus</keyword>
<keyword id="KW-0675">Receptor</keyword>
<keyword id="KW-1185">Reference proteome</keyword>
<keyword id="KW-0804">Transcription</keyword>
<keyword id="KW-0805">Transcription regulation</keyword>
<keyword id="KW-0862">Zinc</keyword>
<keyword id="KW-0863">Zinc-finger</keyword>
<gene>
    <name type="primary">THRB</name>
    <name type="synonym">C-ERBA-BETA</name>
    <name type="synonym">NR1A2</name>
</gene>
<name>THB_CHICK</name>
<reference key="1">
    <citation type="journal article" date="1990" name="EMBO J.">
        <title>Contrasting developmental and tissue-specific expression of alpha and beta thyroid hormone receptor genes.</title>
        <authorList>
            <person name="Forest D."/>
            <person name="Sjoeberg M."/>
            <person name="Vennstroem B."/>
        </authorList>
    </citation>
    <scope>NUCLEOTIDE SEQUENCE [MRNA]</scope>
    <source>
        <strain>SPAFAS</strain>
        <tissue>Kidney</tissue>
    </source>
</reference>
<reference key="2">
    <citation type="journal article" date="1991" name="DNA Cell Biol.">
        <title>Isolation and characterization of a cDNA encoding a chicken beta thyroid hormone receptor.</title>
        <authorList>
            <person name="Showers M.O."/>
            <person name="Darling D.S."/>
            <person name="Kieffer G.D."/>
            <person name="Chin W.W."/>
        </authorList>
    </citation>
    <scope>NUCLEOTIDE SEQUENCE [MRNA]</scope>
</reference>
<reference key="3">
    <citation type="journal article" date="1996" name="Biochim. Biophys. Acta">
        <title>Molecular cloning and sequencing of a cDNA encoding a beta-thyroid hormone receptor in muscovy duckling.</title>
        <authorList>
            <person name="Lachuer J.L."/>
            <person name="Legras C.L."/>
            <person name="Ronfort C.R."/>
            <person name="Barges S.B."/>
            <person name="Cohen-Adad F.C."/>
            <person name="Quivet L.Q."/>
            <person name="Duchamp C.D."/>
            <person name="Verdier G.V."/>
            <person name="Barre H.B."/>
        </authorList>
    </citation>
    <scope>NUCLEOTIDE SEQUENCE [MRNA]</scope>
    <source>
        <tissue>Liver</tissue>
    </source>
</reference>
<evidence type="ECO:0000250" key="1">
    <source>
        <dbReference type="UniProtKB" id="P10828"/>
    </source>
</evidence>
<evidence type="ECO:0000255" key="2"/>
<evidence type="ECO:0000255" key="3">
    <source>
        <dbReference type="PROSITE-ProRule" id="PRU00407"/>
    </source>
</evidence>
<evidence type="ECO:0000255" key="4">
    <source>
        <dbReference type="PROSITE-ProRule" id="PRU01189"/>
    </source>
</evidence>
<evidence type="ECO:0000305" key="5"/>
<accession>P68306</accession>
<accession>P18112</accession>
<organism>
    <name type="scientific">Gallus gallus</name>
    <name type="common">Chicken</name>
    <dbReference type="NCBI Taxonomy" id="9031"/>
    <lineage>
        <taxon>Eukaryota</taxon>
        <taxon>Metazoa</taxon>
        <taxon>Chordata</taxon>
        <taxon>Craniata</taxon>
        <taxon>Vertebrata</taxon>
        <taxon>Euteleostomi</taxon>
        <taxon>Archelosauria</taxon>
        <taxon>Archosauria</taxon>
        <taxon>Dinosauria</taxon>
        <taxon>Saurischia</taxon>
        <taxon>Theropoda</taxon>
        <taxon>Coelurosauria</taxon>
        <taxon>Aves</taxon>
        <taxon>Neognathae</taxon>
        <taxon>Galloanserae</taxon>
        <taxon>Galliformes</taxon>
        <taxon>Phasianidae</taxon>
        <taxon>Phasianinae</taxon>
        <taxon>Gallus</taxon>
    </lineage>
</organism>
<sequence length="369" mass="42097">MSGYIPSYLDKDELCVVCGDKATGYHYRCITCEGCKGFFRRTIQKNLHPTYSCKYEGKCVIDKVTRNQCQECRFKKCIFVGMATDLVLDDSKRLAKRKLIEENREKRRREELQKTIGHKPEPTDEEWELIKIVTEAHVATNAQGSHWKQKRKFLPEDIGQAPIVNAPEGGKVDLEAFSQFTKIITPAITRVVDFAKKLPMFCELPCEDQIILLKGCCMEIMSLRAAVRYDPESETLTLNGEMAVTRGQLKNGGLGVVSDAIFDLGMSLSSFNLDDTEVALLQAVLLMSSDRPGLVCVERIEKCQEGFLLAFEHYINYRKHHVAHFWPKLLMKVTDLRMIGACHASRFLHMKVECPTELFPPLFLEVFED</sequence>
<dbReference type="EMBL" id="X17504">
    <property type="protein sequence ID" value="CAA35544.1"/>
    <property type="molecule type" value="mRNA"/>
</dbReference>
<dbReference type="EMBL" id="M65207">
    <property type="protein sequence ID" value="AAA49107.1"/>
    <property type="molecule type" value="mRNA"/>
</dbReference>
<dbReference type="EMBL" id="Z50188">
    <property type="protein sequence ID" value="CAA90566.1"/>
    <property type="molecule type" value="mRNA"/>
</dbReference>
<dbReference type="PIR" id="S09625">
    <property type="entry name" value="TVCHTB"/>
</dbReference>
<dbReference type="RefSeq" id="NP_990778.2">
    <property type="nucleotide sequence ID" value="NM_205447.2"/>
</dbReference>
<dbReference type="RefSeq" id="XP_015136810.1">
    <property type="nucleotide sequence ID" value="XM_015281324.4"/>
</dbReference>
<dbReference type="RefSeq" id="XP_015136811.1">
    <property type="nucleotide sequence ID" value="XM_015281325.1"/>
</dbReference>
<dbReference type="RefSeq" id="XP_015136812.1">
    <property type="nucleotide sequence ID" value="XM_015281326.1"/>
</dbReference>
<dbReference type="RefSeq" id="XP_025002837.1">
    <property type="nucleotide sequence ID" value="XM_025147069.3"/>
</dbReference>
<dbReference type="RefSeq" id="XP_025002838.1">
    <property type="nucleotide sequence ID" value="XM_025147070.3"/>
</dbReference>
<dbReference type="RefSeq" id="XP_025002839.1">
    <property type="nucleotide sequence ID" value="XM_025147071.3"/>
</dbReference>
<dbReference type="RefSeq" id="XP_025002840.1">
    <property type="nucleotide sequence ID" value="XM_025147072.3"/>
</dbReference>
<dbReference type="RefSeq" id="XP_025002841.1">
    <property type="nucleotide sequence ID" value="XM_025147073.3"/>
</dbReference>
<dbReference type="RefSeq" id="XP_040533067.1">
    <property type="nucleotide sequence ID" value="XM_040677133.2"/>
</dbReference>
<dbReference type="RefSeq" id="XP_040533076.1">
    <property type="nucleotide sequence ID" value="XM_040677142.2"/>
</dbReference>
<dbReference type="RefSeq" id="XP_040533105.1">
    <property type="nucleotide sequence ID" value="XM_040677171.2"/>
</dbReference>
<dbReference type="RefSeq" id="XP_046766494.1">
    <property type="nucleotide sequence ID" value="XM_046910538.1"/>
</dbReference>
<dbReference type="RefSeq" id="XP_046766495.1">
    <property type="nucleotide sequence ID" value="XM_046910539.1"/>
</dbReference>
<dbReference type="RefSeq" id="XP_046766496.1">
    <property type="nucleotide sequence ID" value="XM_046910540.1"/>
</dbReference>
<dbReference type="RefSeq" id="XP_046766497.1">
    <property type="nucleotide sequence ID" value="XM_046910541.1"/>
</dbReference>
<dbReference type="RefSeq" id="XP_046766498.1">
    <property type="nucleotide sequence ID" value="XM_046910542.1"/>
</dbReference>
<dbReference type="RefSeq" id="XP_046766499.1">
    <property type="nucleotide sequence ID" value="XM_046910543.1"/>
</dbReference>
<dbReference type="RefSeq" id="XP_046766500.1">
    <property type="nucleotide sequence ID" value="XM_046910544.1"/>
</dbReference>
<dbReference type="RefSeq" id="XP_046766501.1">
    <property type="nucleotide sequence ID" value="XM_046910545.1"/>
</dbReference>
<dbReference type="RefSeq" id="XP_046766502.1">
    <property type="nucleotide sequence ID" value="XM_046910546.1"/>
</dbReference>
<dbReference type="RefSeq" id="XP_046766503.1">
    <property type="nucleotide sequence ID" value="XM_046910547.1"/>
</dbReference>
<dbReference type="RefSeq" id="XP_046766504.1">
    <property type="nucleotide sequence ID" value="XM_046910548.1"/>
</dbReference>
<dbReference type="RefSeq" id="XP_046766505.1">
    <property type="nucleotide sequence ID" value="XM_046910549.1"/>
</dbReference>
<dbReference type="RefSeq" id="XP_046766506.1">
    <property type="nucleotide sequence ID" value="XM_046910550.1"/>
</dbReference>
<dbReference type="RefSeq" id="XP_046775402.1">
    <property type="nucleotide sequence ID" value="XM_046919446.1"/>
</dbReference>
<dbReference type="RefSeq" id="XP_046775403.1">
    <property type="nucleotide sequence ID" value="XM_046919447.1"/>
</dbReference>
<dbReference type="RefSeq" id="XP_046775410.1">
    <property type="nucleotide sequence ID" value="XM_046919454.1"/>
</dbReference>
<dbReference type="RefSeq" id="XP_046775411.1">
    <property type="nucleotide sequence ID" value="XM_046919455.1"/>
</dbReference>
<dbReference type="SMR" id="P68306"/>
<dbReference type="FunCoup" id="P68306">
    <property type="interactions" value="215"/>
</dbReference>
<dbReference type="IntAct" id="P68306">
    <property type="interactions" value="3"/>
</dbReference>
<dbReference type="STRING" id="9031.ENSGALP00000018402"/>
<dbReference type="PaxDb" id="9031-ENSGALP00000018401"/>
<dbReference type="Ensembl" id="ENSGALT00010003607.1">
    <property type="protein sequence ID" value="ENSGALP00010002032.1"/>
    <property type="gene ID" value="ENSGALG00010001557.1"/>
</dbReference>
<dbReference type="GeneID" id="396431"/>
<dbReference type="KEGG" id="gga:396431"/>
<dbReference type="CTD" id="7068"/>
<dbReference type="VEuPathDB" id="HostDB:geneid_396431"/>
<dbReference type="eggNOG" id="KOG3575">
    <property type="taxonomic scope" value="Eukaryota"/>
</dbReference>
<dbReference type="GeneTree" id="ENSGT00940000156809"/>
<dbReference type="HOGENOM" id="CLU_007368_18_0_1"/>
<dbReference type="InParanoid" id="P68306"/>
<dbReference type="OrthoDB" id="6081310at2759"/>
<dbReference type="PhylomeDB" id="P68306"/>
<dbReference type="Reactome" id="R-GGA-383280">
    <property type="pathway name" value="Nuclear Receptor transcription pathway"/>
</dbReference>
<dbReference type="Reactome" id="R-GGA-4090294">
    <property type="pathway name" value="SUMOylation of intracellular receptors"/>
</dbReference>
<dbReference type="PRO" id="PR:P68306"/>
<dbReference type="Proteomes" id="UP000000539">
    <property type="component" value="Chromosome 2"/>
</dbReference>
<dbReference type="Bgee" id="ENSGALG00000011294">
    <property type="expression patterns" value="Expressed in cerebellum and 9 other cell types or tissues"/>
</dbReference>
<dbReference type="GO" id="GO:0005634">
    <property type="term" value="C:nucleus"/>
    <property type="evidence" value="ECO:0000314"/>
    <property type="project" value="AgBase"/>
</dbReference>
<dbReference type="GO" id="GO:0090575">
    <property type="term" value="C:RNA polymerase II transcription regulator complex"/>
    <property type="evidence" value="ECO:0000318"/>
    <property type="project" value="GO_Central"/>
</dbReference>
<dbReference type="GO" id="GO:0004879">
    <property type="term" value="F:nuclear receptor activity"/>
    <property type="evidence" value="ECO:0000250"/>
    <property type="project" value="UniProtKB"/>
</dbReference>
<dbReference type="GO" id="GO:0000978">
    <property type="term" value="F:RNA polymerase II cis-regulatory region sequence-specific DNA binding"/>
    <property type="evidence" value="ECO:0000318"/>
    <property type="project" value="GO_Central"/>
</dbReference>
<dbReference type="GO" id="GO:1990837">
    <property type="term" value="F:sequence-specific double-stranded DNA binding"/>
    <property type="evidence" value="ECO:0000314"/>
    <property type="project" value="AgBase"/>
</dbReference>
<dbReference type="GO" id="GO:0070324">
    <property type="term" value="F:thyroid hormone binding"/>
    <property type="evidence" value="ECO:0000250"/>
    <property type="project" value="UniProtKB"/>
</dbReference>
<dbReference type="GO" id="GO:0008270">
    <property type="term" value="F:zinc ion binding"/>
    <property type="evidence" value="ECO:0007669"/>
    <property type="project" value="UniProtKB-KW"/>
</dbReference>
<dbReference type="GO" id="GO:0030154">
    <property type="term" value="P:cell differentiation"/>
    <property type="evidence" value="ECO:0000318"/>
    <property type="project" value="GO_Central"/>
</dbReference>
<dbReference type="GO" id="GO:0000122">
    <property type="term" value="P:negative regulation of transcription by RNA polymerase II"/>
    <property type="evidence" value="ECO:0000318"/>
    <property type="project" value="GO_Central"/>
</dbReference>
<dbReference type="GO" id="GO:0045944">
    <property type="term" value="P:positive regulation of transcription by RNA polymerase II"/>
    <property type="evidence" value="ECO:0000318"/>
    <property type="project" value="GO_Central"/>
</dbReference>
<dbReference type="GO" id="GO:0048384">
    <property type="term" value="P:retinoic acid receptor signaling pathway"/>
    <property type="evidence" value="ECO:0000318"/>
    <property type="project" value="GO_Central"/>
</dbReference>
<dbReference type="GO" id="GO:0002154">
    <property type="term" value="P:thyroid hormone receptor signaling pathway"/>
    <property type="evidence" value="ECO:0000318"/>
    <property type="project" value="GO_Central"/>
</dbReference>
<dbReference type="CDD" id="cd06961">
    <property type="entry name" value="NR_DBD_TR"/>
    <property type="match status" value="1"/>
</dbReference>
<dbReference type="CDD" id="cd06935">
    <property type="entry name" value="NR_LBD_TR"/>
    <property type="match status" value="1"/>
</dbReference>
<dbReference type="FunFam" id="1.10.565.10:FF:000006">
    <property type="entry name" value="Thyroid hormone receptor beta 2"/>
    <property type="match status" value="1"/>
</dbReference>
<dbReference type="FunFam" id="3.30.50.10:FF:000011">
    <property type="entry name" value="Thyroid hormone receptor beta isoform"/>
    <property type="match status" value="1"/>
</dbReference>
<dbReference type="Gene3D" id="3.30.50.10">
    <property type="entry name" value="Erythroid Transcription Factor GATA-1, subunit A"/>
    <property type="match status" value="1"/>
</dbReference>
<dbReference type="Gene3D" id="1.10.565.10">
    <property type="entry name" value="Retinoid X Receptor"/>
    <property type="match status" value="1"/>
</dbReference>
<dbReference type="InterPro" id="IPR035500">
    <property type="entry name" value="NHR-like_dom_sf"/>
</dbReference>
<dbReference type="InterPro" id="IPR000536">
    <property type="entry name" value="Nucl_hrmn_rcpt_lig-bd"/>
</dbReference>
<dbReference type="InterPro" id="IPR050234">
    <property type="entry name" value="Nuclear_hormone_rcpt_NR1"/>
</dbReference>
<dbReference type="InterPro" id="IPR001723">
    <property type="entry name" value="Nuclear_hrmn_rcpt"/>
</dbReference>
<dbReference type="InterPro" id="IPR001728">
    <property type="entry name" value="ThyrH_rcpt"/>
</dbReference>
<dbReference type="InterPro" id="IPR001628">
    <property type="entry name" value="Znf_hrmn_rcpt"/>
</dbReference>
<dbReference type="InterPro" id="IPR013088">
    <property type="entry name" value="Znf_NHR/GATA"/>
</dbReference>
<dbReference type="PANTHER" id="PTHR24082">
    <property type="entry name" value="NUCLEAR HORMONE RECEPTOR"/>
    <property type="match status" value="1"/>
</dbReference>
<dbReference type="PANTHER" id="PTHR24082:SF210">
    <property type="entry name" value="THYROID HORMONE RECEPTOR BETA"/>
    <property type="match status" value="1"/>
</dbReference>
<dbReference type="Pfam" id="PF00104">
    <property type="entry name" value="Hormone_recep"/>
    <property type="match status" value="1"/>
</dbReference>
<dbReference type="Pfam" id="PF00105">
    <property type="entry name" value="zf-C4"/>
    <property type="match status" value="1"/>
</dbReference>
<dbReference type="PRINTS" id="PR00398">
    <property type="entry name" value="STRDHORMONER"/>
</dbReference>
<dbReference type="PRINTS" id="PR00047">
    <property type="entry name" value="STROIDFINGER"/>
</dbReference>
<dbReference type="PRINTS" id="PR00546">
    <property type="entry name" value="THYROIDHORMR"/>
</dbReference>
<dbReference type="SMART" id="SM00430">
    <property type="entry name" value="HOLI"/>
    <property type="match status" value="1"/>
</dbReference>
<dbReference type="SMART" id="SM00399">
    <property type="entry name" value="ZnF_C4"/>
    <property type="match status" value="1"/>
</dbReference>
<dbReference type="SUPFAM" id="SSF57716">
    <property type="entry name" value="Glucocorticoid receptor-like (DNA-binding domain)"/>
    <property type="match status" value="1"/>
</dbReference>
<dbReference type="SUPFAM" id="SSF48508">
    <property type="entry name" value="Nuclear receptor ligand-binding domain"/>
    <property type="match status" value="1"/>
</dbReference>
<dbReference type="PROSITE" id="PS51843">
    <property type="entry name" value="NR_LBD"/>
    <property type="match status" value="1"/>
</dbReference>
<dbReference type="PROSITE" id="PS00031">
    <property type="entry name" value="NUCLEAR_REC_DBD_1"/>
    <property type="match status" value="1"/>
</dbReference>
<dbReference type="PROSITE" id="PS51030">
    <property type="entry name" value="NUCLEAR_REC_DBD_2"/>
    <property type="match status" value="1"/>
</dbReference>
<protein>
    <recommendedName>
        <fullName>Thyroid hormone receptor beta</fullName>
    </recommendedName>
    <alternativeName>
        <fullName>Nuclear receptor subfamily 1 group A member 2</fullName>
    </alternativeName>
</protein>
<proteinExistence type="evidence at protein level"/>